<reference key="1">
    <citation type="journal article" date="2004" name="Science">
        <title>The complete genome sequence of Propionibacterium acnes, a commensal of human skin.</title>
        <authorList>
            <person name="Brueggemann H."/>
            <person name="Henne A."/>
            <person name="Hoster F."/>
            <person name="Liesegang H."/>
            <person name="Wiezer A."/>
            <person name="Strittmatter A."/>
            <person name="Hujer S."/>
            <person name="Duerre P."/>
            <person name="Gottschalk G."/>
        </authorList>
    </citation>
    <scope>NUCLEOTIDE SEQUENCE [LARGE SCALE GENOMIC DNA]</scope>
    <source>
        <strain>DSM 16379 / KPA171202</strain>
    </source>
</reference>
<gene>
    <name evidence="1" type="primary">rpsE</name>
    <name type="ordered locus">PPA1844</name>
</gene>
<organism>
    <name type="scientific">Cutibacterium acnes (strain DSM 16379 / KPA171202)</name>
    <name type="common">Propionibacterium acnes</name>
    <dbReference type="NCBI Taxonomy" id="267747"/>
    <lineage>
        <taxon>Bacteria</taxon>
        <taxon>Bacillati</taxon>
        <taxon>Actinomycetota</taxon>
        <taxon>Actinomycetes</taxon>
        <taxon>Propionibacteriales</taxon>
        <taxon>Propionibacteriaceae</taxon>
        <taxon>Cutibacterium</taxon>
    </lineage>
</organism>
<keyword id="KW-0002">3D-structure</keyword>
<keyword id="KW-0687">Ribonucleoprotein</keyword>
<keyword id="KW-0689">Ribosomal protein</keyword>
<keyword id="KW-0694">RNA-binding</keyword>
<keyword id="KW-0699">rRNA-binding</keyword>
<proteinExistence type="evidence at protein level"/>
<evidence type="ECO:0000255" key="1">
    <source>
        <dbReference type="HAMAP-Rule" id="MF_01307"/>
    </source>
</evidence>
<evidence type="ECO:0000256" key="2">
    <source>
        <dbReference type="SAM" id="MobiDB-lite"/>
    </source>
</evidence>
<evidence type="ECO:0000305" key="3"/>
<evidence type="ECO:0007829" key="4">
    <source>
        <dbReference type="PDB" id="8CVO"/>
    </source>
</evidence>
<evidence type="ECO:0007829" key="5">
    <source>
        <dbReference type="PDB" id="8CWO"/>
    </source>
</evidence>
<protein>
    <recommendedName>
        <fullName evidence="1">Small ribosomal subunit protein uS5</fullName>
    </recommendedName>
    <alternativeName>
        <fullName evidence="3">30S ribosomal protein S5</fullName>
    </alternativeName>
</protein>
<name>RS5_CUTAK</name>
<accession>Q6A6P3</accession>
<comment type="function">
    <text evidence="1">With S4 and S12 plays an important role in translational accuracy.</text>
</comment>
<comment type="function">
    <text evidence="1">Located at the back of the 30S subunit body where it stabilizes the conformation of the head with respect to the body.</text>
</comment>
<comment type="subunit">
    <text evidence="1">Part of the 30S ribosomal subunit. Contacts proteins S4 and S8.</text>
</comment>
<comment type="domain">
    <text>The N-terminal domain interacts with the head of the 30S subunit; the C-terminal domain interacts with the body and contacts protein S4. The interaction surface between S4 and S5 is involved in control of translational fidelity.</text>
</comment>
<comment type="similarity">
    <text evidence="1">Belongs to the universal ribosomal protein uS5 family.</text>
</comment>
<dbReference type="EMBL" id="AE017283">
    <property type="protein sequence ID" value="AAT83570.1"/>
    <property type="molecule type" value="Genomic_DNA"/>
</dbReference>
<dbReference type="RefSeq" id="WP_002516004.1">
    <property type="nucleotide sequence ID" value="NZ_CP025935.1"/>
</dbReference>
<dbReference type="PDB" id="8CRX">
    <property type="method" value="EM"/>
    <property type="resolution" value="2.78 A"/>
    <property type="chains" value="E=1-215"/>
</dbReference>
<dbReference type="PDB" id="8CVO">
    <property type="method" value="EM"/>
    <property type="resolution" value="2.95 A"/>
    <property type="chains" value="E=1-215"/>
</dbReference>
<dbReference type="PDB" id="8CWO">
    <property type="method" value="EM"/>
    <property type="resolution" value="2.84 A"/>
    <property type="chains" value="E=1-215"/>
</dbReference>
<dbReference type="PDBsum" id="8CRX"/>
<dbReference type="PDBsum" id="8CVO"/>
<dbReference type="PDBsum" id="8CWO"/>
<dbReference type="SMR" id="Q6A6P3"/>
<dbReference type="EnsemblBacteria" id="AAT83570">
    <property type="protein sequence ID" value="AAT83570"/>
    <property type="gene ID" value="PPA1844"/>
</dbReference>
<dbReference type="GeneID" id="92857793"/>
<dbReference type="KEGG" id="pac:PPA1844"/>
<dbReference type="eggNOG" id="COG0098">
    <property type="taxonomic scope" value="Bacteria"/>
</dbReference>
<dbReference type="HOGENOM" id="CLU_065898_1_1_11"/>
<dbReference type="Proteomes" id="UP000000603">
    <property type="component" value="Chromosome"/>
</dbReference>
<dbReference type="GO" id="GO:0015935">
    <property type="term" value="C:small ribosomal subunit"/>
    <property type="evidence" value="ECO:0007669"/>
    <property type="project" value="InterPro"/>
</dbReference>
<dbReference type="GO" id="GO:0019843">
    <property type="term" value="F:rRNA binding"/>
    <property type="evidence" value="ECO:0007669"/>
    <property type="project" value="UniProtKB-UniRule"/>
</dbReference>
<dbReference type="GO" id="GO:0003735">
    <property type="term" value="F:structural constituent of ribosome"/>
    <property type="evidence" value="ECO:0007669"/>
    <property type="project" value="InterPro"/>
</dbReference>
<dbReference type="GO" id="GO:0006412">
    <property type="term" value="P:translation"/>
    <property type="evidence" value="ECO:0007669"/>
    <property type="project" value="UniProtKB-UniRule"/>
</dbReference>
<dbReference type="FunFam" id="3.30.160.20:FF:000001">
    <property type="entry name" value="30S ribosomal protein S5"/>
    <property type="match status" value="1"/>
</dbReference>
<dbReference type="FunFam" id="3.30.230.10:FF:000002">
    <property type="entry name" value="30S ribosomal protein S5"/>
    <property type="match status" value="1"/>
</dbReference>
<dbReference type="Gene3D" id="3.30.160.20">
    <property type="match status" value="1"/>
</dbReference>
<dbReference type="Gene3D" id="3.30.230.10">
    <property type="match status" value="1"/>
</dbReference>
<dbReference type="HAMAP" id="MF_01307_B">
    <property type="entry name" value="Ribosomal_uS5_B"/>
    <property type="match status" value="1"/>
</dbReference>
<dbReference type="InterPro" id="IPR020568">
    <property type="entry name" value="Ribosomal_Su5_D2-typ_SF"/>
</dbReference>
<dbReference type="InterPro" id="IPR000851">
    <property type="entry name" value="Ribosomal_uS5"/>
</dbReference>
<dbReference type="InterPro" id="IPR005712">
    <property type="entry name" value="Ribosomal_uS5_bac-type"/>
</dbReference>
<dbReference type="InterPro" id="IPR005324">
    <property type="entry name" value="Ribosomal_uS5_C"/>
</dbReference>
<dbReference type="InterPro" id="IPR013810">
    <property type="entry name" value="Ribosomal_uS5_N"/>
</dbReference>
<dbReference type="InterPro" id="IPR018192">
    <property type="entry name" value="Ribosomal_uS5_N_CS"/>
</dbReference>
<dbReference type="InterPro" id="IPR014721">
    <property type="entry name" value="Ribsml_uS5_D2-typ_fold_subgr"/>
</dbReference>
<dbReference type="NCBIfam" id="TIGR01021">
    <property type="entry name" value="rpsE_bact"/>
    <property type="match status" value="1"/>
</dbReference>
<dbReference type="PANTHER" id="PTHR48277">
    <property type="entry name" value="MITOCHONDRIAL RIBOSOMAL PROTEIN S5"/>
    <property type="match status" value="1"/>
</dbReference>
<dbReference type="PANTHER" id="PTHR48277:SF1">
    <property type="entry name" value="MITOCHONDRIAL RIBOSOMAL PROTEIN S5"/>
    <property type="match status" value="1"/>
</dbReference>
<dbReference type="Pfam" id="PF00333">
    <property type="entry name" value="Ribosomal_S5"/>
    <property type="match status" value="1"/>
</dbReference>
<dbReference type="Pfam" id="PF03719">
    <property type="entry name" value="Ribosomal_S5_C"/>
    <property type="match status" value="1"/>
</dbReference>
<dbReference type="SUPFAM" id="SSF54768">
    <property type="entry name" value="dsRNA-binding domain-like"/>
    <property type="match status" value="1"/>
</dbReference>
<dbReference type="SUPFAM" id="SSF54211">
    <property type="entry name" value="Ribosomal protein S5 domain 2-like"/>
    <property type="match status" value="1"/>
</dbReference>
<dbReference type="PROSITE" id="PS00585">
    <property type="entry name" value="RIBOSOMAL_S5"/>
    <property type="match status" value="1"/>
</dbReference>
<dbReference type="PROSITE" id="PS50881">
    <property type="entry name" value="S5_DSRBD"/>
    <property type="match status" value="1"/>
</dbReference>
<sequence>MSGTQRRGGGAGGERRGRDNRRGQNDRNRNQNEYLERVVAINRVAKVVQGGRRFSFTALVVVGDGEGSVGVGYGKAKEVPAAIAKAVEEAKKHFFKVPLVGRTITHPVIGEKAAGVVMLRPASPGTGVIAGGSARAVLECAGVHDVLAKSLGSSNAINVVHATVDALQQLEEPEEVARRRGKSVEDIAPAAMLRARKEADEAAAAARMEEKAGVN</sequence>
<feature type="chain" id="PRO_0000131570" description="Small ribosomal subunit protein uS5">
    <location>
        <begin position="1"/>
        <end position="215"/>
    </location>
</feature>
<feature type="domain" description="S5 DRBM" evidence="1">
    <location>
        <begin position="34"/>
        <end position="97"/>
    </location>
</feature>
<feature type="region of interest" description="Disordered" evidence="2">
    <location>
        <begin position="1"/>
        <end position="31"/>
    </location>
</feature>
<feature type="compositionally biased region" description="Gly residues" evidence="2">
    <location>
        <begin position="1"/>
        <end position="12"/>
    </location>
</feature>
<feature type="compositionally biased region" description="Basic and acidic residues" evidence="2">
    <location>
        <begin position="13"/>
        <end position="31"/>
    </location>
</feature>
<feature type="strand" evidence="4">
    <location>
        <begin position="34"/>
        <end position="47"/>
    </location>
</feature>
<feature type="strand" evidence="4">
    <location>
        <begin position="49"/>
        <end position="63"/>
    </location>
</feature>
<feature type="strand" evidence="4">
    <location>
        <begin position="65"/>
        <end position="67"/>
    </location>
</feature>
<feature type="strand" evidence="4">
    <location>
        <begin position="69"/>
        <end position="78"/>
    </location>
</feature>
<feature type="helix" evidence="4">
    <location>
        <begin position="79"/>
        <end position="91"/>
    </location>
</feature>
<feature type="strand" evidence="5">
    <location>
        <begin position="99"/>
        <end position="106"/>
    </location>
</feature>
<feature type="strand" evidence="5">
    <location>
        <begin position="108"/>
        <end position="110"/>
    </location>
</feature>
<feature type="strand" evidence="5">
    <location>
        <begin position="112"/>
        <end position="114"/>
    </location>
</feature>
<feature type="strand" evidence="5">
    <location>
        <begin position="117"/>
        <end position="121"/>
    </location>
</feature>
<feature type="strand" evidence="5">
    <location>
        <begin position="127"/>
        <end position="129"/>
    </location>
</feature>
<feature type="helix" evidence="5">
    <location>
        <begin position="132"/>
        <end position="141"/>
    </location>
</feature>
<feature type="strand" evidence="5">
    <location>
        <begin position="145"/>
        <end position="150"/>
    </location>
</feature>
<feature type="helix" evidence="5">
    <location>
        <begin position="156"/>
        <end position="168"/>
    </location>
</feature>
<feature type="helix" evidence="5">
    <location>
        <begin position="173"/>
        <end position="180"/>
    </location>
</feature>
<feature type="helix" evidence="5">
    <location>
        <begin position="184"/>
        <end position="187"/>
    </location>
</feature>
<feature type="helix" evidence="5">
    <location>
        <begin position="190"/>
        <end position="209"/>
    </location>
</feature>